<proteinExistence type="inferred from homology"/>
<accession>P67676</accession>
<accession>Q7UAK4</accession>
<accession>Q8XDI0</accession>
<organism>
    <name type="scientific">Escherichia coli O157:H7</name>
    <dbReference type="NCBI Taxonomy" id="83334"/>
    <lineage>
        <taxon>Bacteria</taxon>
        <taxon>Pseudomonadati</taxon>
        <taxon>Pseudomonadota</taxon>
        <taxon>Gammaproteobacteria</taxon>
        <taxon>Enterobacterales</taxon>
        <taxon>Enterobacteriaceae</taxon>
        <taxon>Escherichia</taxon>
    </lineage>
</organism>
<keyword id="KW-0235">DNA replication</keyword>
<keyword id="KW-0238">DNA-binding</keyword>
<keyword id="KW-0639">Primosome</keyword>
<keyword id="KW-1185">Reference proteome</keyword>
<name>PRIB_ECO57</name>
<feature type="chain" id="PRO_0000199051" description="Replication restart protein PriB">
    <location>
        <begin position="1"/>
        <end position="104"/>
    </location>
</feature>
<feature type="domain" description="SSB" evidence="1">
    <location>
        <begin position="1"/>
        <end position="101"/>
    </location>
</feature>
<evidence type="ECO:0000255" key="1">
    <source>
        <dbReference type="HAMAP-Rule" id="MF_00720"/>
    </source>
</evidence>
<gene>
    <name evidence="1" type="primary">priB</name>
    <name type="ordered locus">Z5810</name>
    <name type="ordered locus">ECs5177</name>
</gene>
<sequence>MTNRLVLSGTVCRTPLRKVSPSGIPHCQFVLEHRSVQEEAGFHRQAWCQMPVIVSGHENQAITHSITVGSRITVQGFISCHKAKNGLSKMVLHAEQIELIDSGD</sequence>
<reference key="1">
    <citation type="journal article" date="2001" name="Nature">
        <title>Genome sequence of enterohaemorrhagic Escherichia coli O157:H7.</title>
        <authorList>
            <person name="Perna N.T."/>
            <person name="Plunkett G. III"/>
            <person name="Burland V."/>
            <person name="Mau B."/>
            <person name="Glasner J.D."/>
            <person name="Rose D.J."/>
            <person name="Mayhew G.F."/>
            <person name="Evans P.S."/>
            <person name="Gregor J."/>
            <person name="Kirkpatrick H.A."/>
            <person name="Posfai G."/>
            <person name="Hackett J."/>
            <person name="Klink S."/>
            <person name="Boutin A."/>
            <person name="Shao Y."/>
            <person name="Miller L."/>
            <person name="Grotbeck E.J."/>
            <person name="Davis N.W."/>
            <person name="Lim A."/>
            <person name="Dimalanta E.T."/>
            <person name="Potamousis K."/>
            <person name="Apodaca J."/>
            <person name="Anantharaman T.S."/>
            <person name="Lin J."/>
            <person name="Yen G."/>
            <person name="Schwartz D.C."/>
            <person name="Welch R.A."/>
            <person name="Blattner F.R."/>
        </authorList>
    </citation>
    <scope>NUCLEOTIDE SEQUENCE [LARGE SCALE GENOMIC DNA]</scope>
    <source>
        <strain>O157:H7 / EDL933 / ATCC 700927 / EHEC</strain>
    </source>
</reference>
<reference key="2">
    <citation type="journal article" date="2001" name="DNA Res.">
        <title>Complete genome sequence of enterohemorrhagic Escherichia coli O157:H7 and genomic comparison with a laboratory strain K-12.</title>
        <authorList>
            <person name="Hayashi T."/>
            <person name="Makino K."/>
            <person name="Ohnishi M."/>
            <person name="Kurokawa K."/>
            <person name="Ishii K."/>
            <person name="Yokoyama K."/>
            <person name="Han C.-G."/>
            <person name="Ohtsubo E."/>
            <person name="Nakayama K."/>
            <person name="Murata T."/>
            <person name="Tanaka M."/>
            <person name="Tobe T."/>
            <person name="Iida T."/>
            <person name="Takami H."/>
            <person name="Honda T."/>
            <person name="Sasakawa C."/>
            <person name="Ogasawara N."/>
            <person name="Yasunaga T."/>
            <person name="Kuhara S."/>
            <person name="Shiba T."/>
            <person name="Hattori M."/>
            <person name="Shinagawa H."/>
        </authorList>
    </citation>
    <scope>NUCLEOTIDE SEQUENCE [LARGE SCALE GENOMIC DNA]</scope>
    <source>
        <strain>O157:H7 / Sakai / RIMD 0509952 / EHEC</strain>
    </source>
</reference>
<dbReference type="EMBL" id="AE005174">
    <property type="protein sequence ID" value="AAG59397.1"/>
    <property type="molecule type" value="Genomic_DNA"/>
</dbReference>
<dbReference type="EMBL" id="BA000007">
    <property type="protein sequence ID" value="BAB38600.1"/>
    <property type="molecule type" value="Genomic_DNA"/>
</dbReference>
<dbReference type="PIR" id="A86117">
    <property type="entry name" value="A86117"/>
</dbReference>
<dbReference type="PIR" id="A91276">
    <property type="entry name" value="A91276"/>
</dbReference>
<dbReference type="RefSeq" id="NP_313204.1">
    <property type="nucleotide sequence ID" value="NC_002695.1"/>
</dbReference>
<dbReference type="RefSeq" id="WP_001296681.1">
    <property type="nucleotide sequence ID" value="NZ_VOAI01000008.1"/>
</dbReference>
<dbReference type="SMR" id="P67676"/>
<dbReference type="STRING" id="155864.Z5810"/>
<dbReference type="GeneID" id="913985"/>
<dbReference type="GeneID" id="93777622"/>
<dbReference type="KEGG" id="ece:Z5810"/>
<dbReference type="KEGG" id="ecs:ECs_5177"/>
<dbReference type="PATRIC" id="fig|386585.9.peg.5411"/>
<dbReference type="HOGENOM" id="CLU_166075_0_0_6"/>
<dbReference type="OMA" id="CQMPVII"/>
<dbReference type="Proteomes" id="UP000000558">
    <property type="component" value="Chromosome"/>
</dbReference>
<dbReference type="Proteomes" id="UP000002519">
    <property type="component" value="Chromosome"/>
</dbReference>
<dbReference type="GO" id="GO:1990077">
    <property type="term" value="C:primosome complex"/>
    <property type="evidence" value="ECO:0007669"/>
    <property type="project" value="UniProtKB-KW"/>
</dbReference>
<dbReference type="GO" id="GO:0003697">
    <property type="term" value="F:single-stranded DNA binding"/>
    <property type="evidence" value="ECO:0007669"/>
    <property type="project" value="UniProtKB-UniRule"/>
</dbReference>
<dbReference type="GO" id="GO:0006269">
    <property type="term" value="P:DNA replication, synthesis of primer"/>
    <property type="evidence" value="ECO:0007669"/>
    <property type="project" value="UniProtKB-KW"/>
</dbReference>
<dbReference type="CDD" id="cd04496">
    <property type="entry name" value="SSB_OBF"/>
    <property type="match status" value="1"/>
</dbReference>
<dbReference type="FunFam" id="2.40.50.140:FF:000077">
    <property type="entry name" value="Primosomal replication protein N"/>
    <property type="match status" value="1"/>
</dbReference>
<dbReference type="Gene3D" id="2.40.50.140">
    <property type="entry name" value="Nucleic acid-binding proteins"/>
    <property type="match status" value="1"/>
</dbReference>
<dbReference type="HAMAP" id="MF_00720">
    <property type="entry name" value="PriB"/>
    <property type="match status" value="1"/>
</dbReference>
<dbReference type="InterPro" id="IPR012340">
    <property type="entry name" value="NA-bd_OB-fold"/>
</dbReference>
<dbReference type="InterPro" id="IPR000424">
    <property type="entry name" value="Primosome_PriB/ssb"/>
</dbReference>
<dbReference type="InterPro" id="IPR023646">
    <property type="entry name" value="Prisomal_replication_PriB"/>
</dbReference>
<dbReference type="NCBIfam" id="TIGR04418">
    <property type="entry name" value="PriB_gamma"/>
    <property type="match status" value="1"/>
</dbReference>
<dbReference type="Pfam" id="PF22657">
    <property type="entry name" value="SSB_1"/>
    <property type="match status" value="1"/>
</dbReference>
<dbReference type="PIRSF" id="PIRSF003135">
    <property type="entry name" value="Primosomal_n"/>
    <property type="match status" value="1"/>
</dbReference>
<dbReference type="SUPFAM" id="SSF50249">
    <property type="entry name" value="Nucleic acid-binding proteins"/>
    <property type="match status" value="1"/>
</dbReference>
<dbReference type="PROSITE" id="PS50935">
    <property type="entry name" value="SSB"/>
    <property type="match status" value="1"/>
</dbReference>
<comment type="function">
    <text evidence="1">Involved in the restart of stalled replication forks, which reloads the replicative helicase on sites other than the origin of replication; the PriA-PriB pathway is the major replication restart pathway. During primosome assembly it facilitates complex formation between PriA and DnaT on DNA; stabilizes PriA on DNA. Stimulates the DNA unwinding activity of PriA helicase.</text>
</comment>
<comment type="subunit">
    <text evidence="1">Homodimer. Interacts with PriA and DnaT. Component of the replication restart primosome. Primosome assembly occurs via a 'hand-off' mechanism. PriA binds to replication forks, subsequently PriB then DnaT bind; DnaT then displaces ssDNA to generate the helicase loading substrate.</text>
</comment>
<comment type="similarity">
    <text evidence="1">Belongs to the PriB family.</text>
</comment>
<protein>
    <recommendedName>
        <fullName evidence="1">Replication restart protein PriB</fullName>
    </recommendedName>
</protein>